<comment type="function">
    <text evidence="1">Together with its co-chaperonin GroES, plays an essential role in assisting protein folding. The GroEL-GroES system forms a nano-cage that allows encapsulation of the non-native substrate proteins and provides a physical environment optimized to promote and accelerate protein folding.</text>
</comment>
<comment type="catalytic activity">
    <reaction evidence="1">
        <text>ATP + H2O + a folded polypeptide = ADP + phosphate + an unfolded polypeptide.</text>
        <dbReference type="EC" id="5.6.1.7"/>
    </reaction>
</comment>
<comment type="subunit">
    <text evidence="1">Forms a cylinder of 14 subunits composed of two heptameric rings stacked back-to-back. Interacts with the co-chaperonin GroES.</text>
</comment>
<comment type="subcellular location">
    <subcellularLocation>
        <location evidence="1">Cytoplasm</location>
    </subcellularLocation>
</comment>
<comment type="similarity">
    <text evidence="1">Belongs to the chaperonin (HSP60) family.</text>
</comment>
<protein>
    <recommendedName>
        <fullName evidence="1">Chaperonin GroEL</fullName>
        <ecNumber evidence="1">5.6.1.7</ecNumber>
    </recommendedName>
    <alternativeName>
        <fullName evidence="1">60 kDa chaperonin</fullName>
    </alternativeName>
    <alternativeName>
        <fullName evidence="1">Chaperonin-60</fullName>
        <shortName evidence="1">Cpn60</shortName>
    </alternativeName>
</protein>
<feature type="chain" id="PRO_1000130056" description="Chaperonin GroEL">
    <location>
        <begin position="1"/>
        <end position="548"/>
    </location>
</feature>
<feature type="binding site" evidence="1">
    <location>
        <begin position="30"/>
        <end position="33"/>
    </location>
    <ligand>
        <name>ATP</name>
        <dbReference type="ChEBI" id="CHEBI:30616"/>
    </ligand>
</feature>
<feature type="binding site" evidence="1">
    <location>
        <position position="51"/>
    </location>
    <ligand>
        <name>ATP</name>
        <dbReference type="ChEBI" id="CHEBI:30616"/>
    </ligand>
</feature>
<feature type="binding site" evidence="1">
    <location>
        <begin position="87"/>
        <end position="91"/>
    </location>
    <ligand>
        <name>ATP</name>
        <dbReference type="ChEBI" id="CHEBI:30616"/>
    </ligand>
</feature>
<feature type="binding site" evidence="1">
    <location>
        <position position="415"/>
    </location>
    <ligand>
        <name>ATP</name>
        <dbReference type="ChEBI" id="CHEBI:30616"/>
    </ligand>
</feature>
<feature type="binding site" evidence="1">
    <location>
        <begin position="479"/>
        <end position="481"/>
    </location>
    <ligand>
        <name>ATP</name>
        <dbReference type="ChEBI" id="CHEBI:30616"/>
    </ligand>
</feature>
<feature type="binding site" evidence="1">
    <location>
        <position position="495"/>
    </location>
    <ligand>
        <name>ATP</name>
        <dbReference type="ChEBI" id="CHEBI:30616"/>
    </ligand>
</feature>
<keyword id="KW-0067">ATP-binding</keyword>
<keyword id="KW-0143">Chaperone</keyword>
<keyword id="KW-0963">Cytoplasm</keyword>
<keyword id="KW-0413">Isomerase</keyword>
<keyword id="KW-0547">Nucleotide-binding</keyword>
<proteinExistence type="inferred from homology"/>
<evidence type="ECO:0000255" key="1">
    <source>
        <dbReference type="HAMAP-Rule" id="MF_00600"/>
    </source>
</evidence>
<name>CH60_SALPK</name>
<accession>B5BKF4</accession>
<organism>
    <name type="scientific">Salmonella paratyphi A (strain AKU_12601)</name>
    <dbReference type="NCBI Taxonomy" id="554290"/>
    <lineage>
        <taxon>Bacteria</taxon>
        <taxon>Pseudomonadati</taxon>
        <taxon>Pseudomonadota</taxon>
        <taxon>Gammaproteobacteria</taxon>
        <taxon>Enterobacterales</taxon>
        <taxon>Enterobacteriaceae</taxon>
        <taxon>Salmonella</taxon>
    </lineage>
</organism>
<dbReference type="EC" id="5.6.1.7" evidence="1"/>
<dbReference type="EMBL" id="FM200053">
    <property type="protein sequence ID" value="CAR62137.1"/>
    <property type="molecule type" value="Genomic_DNA"/>
</dbReference>
<dbReference type="RefSeq" id="WP_000729126.1">
    <property type="nucleotide sequence ID" value="NC_011147.1"/>
</dbReference>
<dbReference type="SMR" id="B5BKF4"/>
<dbReference type="KEGG" id="sek:SSPA3851"/>
<dbReference type="HOGENOM" id="CLU_016503_3_0_6"/>
<dbReference type="Proteomes" id="UP000001869">
    <property type="component" value="Chromosome"/>
</dbReference>
<dbReference type="GO" id="GO:0005737">
    <property type="term" value="C:cytoplasm"/>
    <property type="evidence" value="ECO:0007669"/>
    <property type="project" value="UniProtKB-SubCell"/>
</dbReference>
<dbReference type="GO" id="GO:0005524">
    <property type="term" value="F:ATP binding"/>
    <property type="evidence" value="ECO:0007669"/>
    <property type="project" value="UniProtKB-UniRule"/>
</dbReference>
<dbReference type="GO" id="GO:0140662">
    <property type="term" value="F:ATP-dependent protein folding chaperone"/>
    <property type="evidence" value="ECO:0007669"/>
    <property type="project" value="InterPro"/>
</dbReference>
<dbReference type="GO" id="GO:0016853">
    <property type="term" value="F:isomerase activity"/>
    <property type="evidence" value="ECO:0007669"/>
    <property type="project" value="UniProtKB-KW"/>
</dbReference>
<dbReference type="GO" id="GO:0051082">
    <property type="term" value="F:unfolded protein binding"/>
    <property type="evidence" value="ECO:0007669"/>
    <property type="project" value="UniProtKB-UniRule"/>
</dbReference>
<dbReference type="GO" id="GO:0042026">
    <property type="term" value="P:protein refolding"/>
    <property type="evidence" value="ECO:0007669"/>
    <property type="project" value="UniProtKB-UniRule"/>
</dbReference>
<dbReference type="CDD" id="cd03344">
    <property type="entry name" value="GroEL"/>
    <property type="match status" value="1"/>
</dbReference>
<dbReference type="FunFam" id="1.10.560.10:FF:000001">
    <property type="entry name" value="60 kDa chaperonin"/>
    <property type="match status" value="1"/>
</dbReference>
<dbReference type="FunFam" id="3.50.7.10:FF:000001">
    <property type="entry name" value="60 kDa chaperonin"/>
    <property type="match status" value="1"/>
</dbReference>
<dbReference type="Gene3D" id="3.50.7.10">
    <property type="entry name" value="GroEL"/>
    <property type="match status" value="1"/>
</dbReference>
<dbReference type="Gene3D" id="1.10.560.10">
    <property type="entry name" value="GroEL-like equatorial domain"/>
    <property type="match status" value="1"/>
</dbReference>
<dbReference type="Gene3D" id="3.30.260.10">
    <property type="entry name" value="TCP-1-like chaperonin intermediate domain"/>
    <property type="match status" value="1"/>
</dbReference>
<dbReference type="HAMAP" id="MF_00600">
    <property type="entry name" value="CH60"/>
    <property type="match status" value="1"/>
</dbReference>
<dbReference type="InterPro" id="IPR018370">
    <property type="entry name" value="Chaperonin_Cpn60_CS"/>
</dbReference>
<dbReference type="InterPro" id="IPR001844">
    <property type="entry name" value="Cpn60/GroEL"/>
</dbReference>
<dbReference type="InterPro" id="IPR002423">
    <property type="entry name" value="Cpn60/GroEL/TCP-1"/>
</dbReference>
<dbReference type="InterPro" id="IPR027409">
    <property type="entry name" value="GroEL-like_apical_dom_sf"/>
</dbReference>
<dbReference type="InterPro" id="IPR027413">
    <property type="entry name" value="GROEL-like_equatorial_sf"/>
</dbReference>
<dbReference type="InterPro" id="IPR027410">
    <property type="entry name" value="TCP-1-like_intermed_sf"/>
</dbReference>
<dbReference type="NCBIfam" id="TIGR02348">
    <property type="entry name" value="GroEL"/>
    <property type="match status" value="1"/>
</dbReference>
<dbReference type="NCBIfam" id="NF000592">
    <property type="entry name" value="PRK00013.1"/>
    <property type="match status" value="1"/>
</dbReference>
<dbReference type="NCBIfam" id="NF009487">
    <property type="entry name" value="PRK12849.1"/>
    <property type="match status" value="1"/>
</dbReference>
<dbReference type="NCBIfam" id="NF009488">
    <property type="entry name" value="PRK12850.1"/>
    <property type="match status" value="1"/>
</dbReference>
<dbReference type="NCBIfam" id="NF009489">
    <property type="entry name" value="PRK12851.1"/>
    <property type="match status" value="1"/>
</dbReference>
<dbReference type="PANTHER" id="PTHR45633">
    <property type="entry name" value="60 KDA HEAT SHOCK PROTEIN, MITOCHONDRIAL"/>
    <property type="match status" value="1"/>
</dbReference>
<dbReference type="Pfam" id="PF00118">
    <property type="entry name" value="Cpn60_TCP1"/>
    <property type="match status" value="1"/>
</dbReference>
<dbReference type="PRINTS" id="PR00298">
    <property type="entry name" value="CHAPERONIN60"/>
</dbReference>
<dbReference type="SUPFAM" id="SSF52029">
    <property type="entry name" value="GroEL apical domain-like"/>
    <property type="match status" value="1"/>
</dbReference>
<dbReference type="SUPFAM" id="SSF48592">
    <property type="entry name" value="GroEL equatorial domain-like"/>
    <property type="match status" value="1"/>
</dbReference>
<dbReference type="SUPFAM" id="SSF54849">
    <property type="entry name" value="GroEL-intermediate domain like"/>
    <property type="match status" value="1"/>
</dbReference>
<dbReference type="PROSITE" id="PS00296">
    <property type="entry name" value="CHAPERONINS_CPN60"/>
    <property type="match status" value="1"/>
</dbReference>
<gene>
    <name evidence="1" type="primary">groEL</name>
    <name evidence="1" type="synonym">groL</name>
    <name type="ordered locus">SSPA3851</name>
</gene>
<sequence length="548" mass="57286">MAAKDVKFGNDARVKMLRGVNVLADAVKVTLGPKGRNVVLDKSFGAPTITKDGVSVAREIELEDKFENMGAQMVKEVASKANDAAGDGTTTATVLAQSIITEGLKAVAAGMNPMDLKRGIDKAVAAAVEELKALSVPCSDSKAIAQVGTISANSDETVGKLIAEAMDKVGKEGVITVEDGTGLQDELDVVEGMQFDRGYLSPYFINKPETGAVELESPFILLADKKISNIREMLPVLEAVAKAGKPLLIIAEDVEGEALATLVVNTMRGIVKVAAVKAPGFGDRRKAMLQDIATLTGGTVISEEIGMELEKATLEDLGQAKRVVINKDTTTIIDGVGEEAAIQGRVAQIRQQIEEATSDYDREKLQERVAKLAGGVAVIKVGAATEVEMKEKKARVEDALHATRAAVEEGVVAGGGVALIRVASKIADLKGQNEDQNVGIKVALRAMEAPLRQIVLNCGEEPSVVANTVKGGDGNYGYNAATEEYGNMIDMGILDPTKVTRSALQYAASVAGLMITTECMVTDLPKSDAPDLGAAGGMGGMGGMGGMM</sequence>
<reference key="1">
    <citation type="journal article" date="2009" name="BMC Genomics">
        <title>Pseudogene accumulation in the evolutionary histories of Salmonella enterica serovars Paratyphi A and Typhi.</title>
        <authorList>
            <person name="Holt K.E."/>
            <person name="Thomson N.R."/>
            <person name="Wain J."/>
            <person name="Langridge G.C."/>
            <person name="Hasan R."/>
            <person name="Bhutta Z.A."/>
            <person name="Quail M.A."/>
            <person name="Norbertczak H."/>
            <person name="Walker D."/>
            <person name="Simmonds M."/>
            <person name="White B."/>
            <person name="Bason N."/>
            <person name="Mungall K."/>
            <person name="Dougan G."/>
            <person name="Parkhill J."/>
        </authorList>
    </citation>
    <scope>NUCLEOTIDE SEQUENCE [LARGE SCALE GENOMIC DNA]</scope>
    <source>
        <strain>AKU_12601</strain>
    </source>
</reference>